<reference key="1">
    <citation type="journal article" date="2000" name="DNA Res.">
        <title>Complete genome structure of the nitrogen-fixing symbiotic bacterium Mesorhizobium loti.</title>
        <authorList>
            <person name="Kaneko T."/>
            <person name="Nakamura Y."/>
            <person name="Sato S."/>
            <person name="Asamizu E."/>
            <person name="Kato T."/>
            <person name="Sasamoto S."/>
            <person name="Watanabe A."/>
            <person name="Idesawa K."/>
            <person name="Ishikawa A."/>
            <person name="Kawashima K."/>
            <person name="Kimura T."/>
            <person name="Kishida Y."/>
            <person name="Kiyokawa C."/>
            <person name="Kohara M."/>
            <person name="Matsumoto M."/>
            <person name="Matsuno A."/>
            <person name="Mochizuki Y."/>
            <person name="Nakayama S."/>
            <person name="Nakazaki N."/>
            <person name="Shimpo S."/>
            <person name="Sugimoto M."/>
            <person name="Takeuchi C."/>
            <person name="Yamada M."/>
            <person name="Tabata S."/>
        </authorList>
    </citation>
    <scope>NUCLEOTIDE SEQUENCE [LARGE SCALE GENOMIC DNA]</scope>
    <source>
        <strain>LMG 29417 / CECT 9101 / MAFF 303099</strain>
    </source>
</reference>
<protein>
    <recommendedName>
        <fullName evidence="1">UPF0301 protein mlr7511</fullName>
    </recommendedName>
</protein>
<name>Y7511_RHILO</name>
<feature type="chain" id="PRO_0000214340" description="UPF0301 protein mlr7511">
    <location>
        <begin position="1"/>
        <end position="202"/>
    </location>
</feature>
<dbReference type="EMBL" id="BA000012">
    <property type="protein sequence ID" value="BAB53956.1"/>
    <property type="molecule type" value="Genomic_DNA"/>
</dbReference>
<dbReference type="RefSeq" id="WP_027046619.1">
    <property type="nucleotide sequence ID" value="NC_002678.2"/>
</dbReference>
<dbReference type="SMR" id="Q985V6"/>
<dbReference type="KEGG" id="mlo:mlr7511"/>
<dbReference type="eggNOG" id="COG1678">
    <property type="taxonomic scope" value="Bacteria"/>
</dbReference>
<dbReference type="HOGENOM" id="CLU_057596_1_0_5"/>
<dbReference type="Proteomes" id="UP000000552">
    <property type="component" value="Chromosome"/>
</dbReference>
<dbReference type="GO" id="GO:0005829">
    <property type="term" value="C:cytosol"/>
    <property type="evidence" value="ECO:0007669"/>
    <property type="project" value="TreeGrafter"/>
</dbReference>
<dbReference type="Gene3D" id="3.40.1740.10">
    <property type="entry name" value="VC0467-like"/>
    <property type="match status" value="1"/>
</dbReference>
<dbReference type="HAMAP" id="MF_00758">
    <property type="entry name" value="UPF0301"/>
    <property type="match status" value="1"/>
</dbReference>
<dbReference type="InterPro" id="IPR003774">
    <property type="entry name" value="AlgH-like"/>
</dbReference>
<dbReference type="NCBIfam" id="NF001266">
    <property type="entry name" value="PRK00228.1-1"/>
    <property type="match status" value="1"/>
</dbReference>
<dbReference type="NCBIfam" id="NF001268">
    <property type="entry name" value="PRK00228.1-4"/>
    <property type="match status" value="1"/>
</dbReference>
<dbReference type="PANTHER" id="PTHR30327">
    <property type="entry name" value="UNCHARACTERIZED PROTEIN YQGE"/>
    <property type="match status" value="1"/>
</dbReference>
<dbReference type="PANTHER" id="PTHR30327:SF1">
    <property type="entry name" value="UPF0301 PROTEIN YQGE"/>
    <property type="match status" value="1"/>
</dbReference>
<dbReference type="Pfam" id="PF02622">
    <property type="entry name" value="DUF179"/>
    <property type="match status" value="1"/>
</dbReference>
<dbReference type="SUPFAM" id="SSF143456">
    <property type="entry name" value="VC0467-like"/>
    <property type="match status" value="1"/>
</dbReference>
<proteinExistence type="inferred from homology"/>
<accession>Q985V6</accession>
<evidence type="ECO:0000255" key="1">
    <source>
        <dbReference type="HAMAP-Rule" id="MF_00758"/>
    </source>
</evidence>
<organism>
    <name type="scientific">Mesorhizobium japonicum (strain LMG 29417 / CECT 9101 / MAFF 303099)</name>
    <name type="common">Mesorhizobium loti (strain MAFF 303099)</name>
    <dbReference type="NCBI Taxonomy" id="266835"/>
    <lineage>
        <taxon>Bacteria</taxon>
        <taxon>Pseudomonadati</taxon>
        <taxon>Pseudomonadota</taxon>
        <taxon>Alphaproteobacteria</taxon>
        <taxon>Hyphomicrobiales</taxon>
        <taxon>Phyllobacteriaceae</taxon>
        <taxon>Mesorhizobium</taxon>
    </lineage>
</organism>
<sequence>MDLLRHKKTAAGRGFLDDQFLIAMPGMKDDRFTRSVIYICAHSDEGAMGLIINQTQQMLFPDLLVQLGIMNEQEAIRLPAQARDFVVRNGGPVDRSRGFVLHSGDYRVESSLTVSDDICLTATVDILRAISSGRGPRHALMALGYSGWGAGQLETEIAENGWLTCPASPELLFDADIERKYDRILASIGIDLAHLSLAAGHA</sequence>
<comment type="similarity">
    <text evidence="1">Belongs to the UPF0301 (AlgH) family.</text>
</comment>
<gene>
    <name type="ordered locus">mlr7511</name>
</gene>